<sequence>MELLPLWLCLGFHFLTVGWRNRSGTATAASQGVCKLVGGAADCRGQSLASVPSSLPPHARMLTLDANPLKTLWNHSLQPYPLLESLSLHSCHLERISRGAFQEQGHLRSLVLGDNCLSENYEETAAALHALPGLRRLDLSGNALTEDMAALMLQNLSSLRSVSLAGNTIMRLDDSVFEGLERLRELDLQRNYIFEIEGGAFDGLAELRHLNLAFNNLPCIVDFGLTRLRVLNVSYNVLEWFLATGGEAAFELETLDLSHNQLLFFPLLPQYSKLRTLLLRDNNMGFYRDLYNTSSPREMVAQFLLVDGNVTNITTVSLWEEFSSSDLADLRFLDMSQNQFQYLPDGFLRKMPSLSHLNLHQNCLMTLHIREHEPPGALTELDLSHNQLSELHLAPGLASCLGSLRLFNLSSNQLLGVPPGLFANARNITTLDMSHNQISLCPLPAASDRVGPPSCVDFRNMASLRSLSLEGCGLGALPDCPFQGTSLTYLDLSSNWGVLNGSLAPLQDVAPMLQVLSLRNMGLHSSFMALDFSGFGNLRDLDLSGNCLTTFPRFGGSLALETLDLRRNSLTALPQKAVSEQLSRGLRTIYLSQNPYDCCGVDGWGALQHGQTVADWAMVTCNLSSKIIRVTELPGGVPRDCKWERLDLGLLYLVLILPSCLTLLVACTVIVLTFKKPLLQVIKSRCHWSSVY</sequence>
<gene>
    <name evidence="10" type="primary">NRROS</name>
    <name evidence="8 10" type="synonym">LRRC33</name>
    <name evidence="7" type="ORF">UNQ3030/PRO9833</name>
</gene>
<proteinExistence type="evidence at protein level"/>
<keyword id="KW-1003">Cell membrane</keyword>
<keyword id="KW-0225">Disease variant</keyword>
<keyword id="KW-1015">Disulfide bond</keyword>
<keyword id="KW-0256">Endoplasmic reticulum</keyword>
<keyword id="KW-0887">Epilepsy</keyword>
<keyword id="KW-0325">Glycoprotein</keyword>
<keyword id="KW-0340">Growth factor binding</keyword>
<keyword id="KW-0433">Leucine-rich repeat</keyword>
<keyword id="KW-0472">Membrane</keyword>
<keyword id="KW-0523">Neurodegeneration</keyword>
<keyword id="KW-1267">Proteomics identification</keyword>
<keyword id="KW-1185">Reference proteome</keyword>
<keyword id="KW-0677">Repeat</keyword>
<keyword id="KW-0732">Signal</keyword>
<keyword id="KW-0812">Transmembrane</keyword>
<keyword id="KW-1133">Transmembrane helix</keyword>
<evidence type="ECO:0000250" key="1">
    <source>
        <dbReference type="UniProtKB" id="Q8BMT4"/>
    </source>
</evidence>
<evidence type="ECO:0000255" key="2"/>
<evidence type="ECO:0000269" key="3">
    <source>
    </source>
</evidence>
<evidence type="ECO:0000269" key="4">
    <source>
    </source>
</evidence>
<evidence type="ECO:0000269" key="5">
    <source>
    </source>
</evidence>
<evidence type="ECO:0000269" key="6">
    <source>
    </source>
</evidence>
<evidence type="ECO:0000303" key="7">
    <source>
    </source>
</evidence>
<evidence type="ECO:0000303" key="8">
    <source>
    </source>
</evidence>
<evidence type="ECO:0000305" key="9"/>
<evidence type="ECO:0000312" key="10">
    <source>
        <dbReference type="HGNC" id="HGNC:24613"/>
    </source>
</evidence>
<protein>
    <recommendedName>
        <fullName evidence="9">Transforming growth factor beta activator LRRC33</fullName>
    </recommendedName>
    <alternativeName>
        <fullName evidence="9">Leucine-rich repeat-containing protein 33</fullName>
    </alternativeName>
    <alternativeName>
        <fullName evidence="1">Negative regulator of reactive oxygen species</fullName>
    </alternativeName>
</protein>
<organism>
    <name type="scientific">Homo sapiens</name>
    <name type="common">Human</name>
    <dbReference type="NCBI Taxonomy" id="9606"/>
    <lineage>
        <taxon>Eukaryota</taxon>
        <taxon>Metazoa</taxon>
        <taxon>Chordata</taxon>
        <taxon>Craniata</taxon>
        <taxon>Vertebrata</taxon>
        <taxon>Euteleostomi</taxon>
        <taxon>Mammalia</taxon>
        <taxon>Eutheria</taxon>
        <taxon>Euarchontoglires</taxon>
        <taxon>Primates</taxon>
        <taxon>Haplorrhini</taxon>
        <taxon>Catarrhini</taxon>
        <taxon>Hominidae</taxon>
        <taxon>Homo</taxon>
    </lineage>
</organism>
<comment type="function">
    <text evidence="1 3">Key regulator of transforming growth factor beta-1 (TGFB1) specifically required for microglia function in the nervous system (By similarity). Required for activation of latent TGF-beta-1 in macrophages and microglia: associates specifically via disulfide bonds with the Latency-associated peptide (LAP), which is the regulatory chain of TGFB1, and regulates integrin-dependent activation of TGF-beta-1 (By similarity). TGF-beta-1 activation mediated by LRRC33/NRROS is highly localized: there is little spreading of TGF-beta-1 activated from one microglial cell to neighboring microglia, suggesting the existence of localized and selective activation of TGF-beta-1 by LRRC33/NRROS (By similarity). Indirectly plays a role in Toll-like receptor (TLR) signaling: ability to inhibit TLR-mediated NF-kappa-B activation and cytokine production is probably a consequence of its role in TGF-beta-1 signaling (PubMed:23545260).</text>
</comment>
<comment type="subunit">
    <text evidence="1 3 4">Interacts with TGFB1; associates via disulfide bonds with the Latency-associated peptide chain (LAP) regulatory chain of TGFB1, leading to regulate activation of TGF-beta-1 (PubMed:29909984). Interacts (via LRR repeats) with TLR2, TLR3, TLR4, TLR9 and probably other Toll-like receptors (PubMed:23545260). Interacts with CYBB/NOX2; the interaction is direct (By similarity).</text>
</comment>
<comment type="subcellular location">
    <subcellularLocation>
        <location evidence="3 4">Cell membrane</location>
        <topology evidence="2">Single-pass type I membrane protein</topology>
    </subcellularLocation>
    <subcellularLocation>
        <location evidence="6">Endoplasmic reticulum membrane</location>
        <topology evidence="2">Single-pass type I membrane protein</topology>
    </subcellularLocation>
</comment>
<comment type="tissue specificity">
    <text evidence="3 5">Mainly expressed in cells of hematopoietic origin (PubMed:29909984). Highly expressed in bone marrow, thymus, liver, lung, intestine and spleen (PubMed:23545260). In the brain, highly expressed in microglia (PubMed:32100099).</text>
</comment>
<comment type="disease" evidence="5 6">
    <disease id="DI-05833">
        <name>Seizures, early-onset, with neurodegeneration and brain calcification</name>
        <acronym>SENEBAC</acronym>
        <description>An autosomal recessive neurodegenerative disorder clinically characterized by refractory seizures apparent in the first year of life, mild early developmental delay, and developmental regression after seizure onset. Other features include hypotonia, hyperreflexia, peripheral spasticity, poor eye contact, absent speech, poor head control, and inability to walk. Brain imaging shows reduced white matter volume with delayed myelination, and punctate calcifications.</description>
        <dbReference type="MIM" id="618875"/>
    </disease>
    <text>The protein represented in this entry is involved in disease pathogenesis.</text>
</comment>
<comment type="similarity">
    <text evidence="9">Belongs to the LRRC32/LRRC33 family.</text>
</comment>
<feature type="signal peptide" evidence="2">
    <location>
        <begin position="1"/>
        <end position="18"/>
    </location>
</feature>
<feature type="chain" id="PRO_0000042660" description="Transforming growth factor beta activator LRRC33">
    <location>
        <begin position="19"/>
        <end position="692"/>
    </location>
</feature>
<feature type="topological domain" description="Extracellular" evidence="2">
    <location>
        <begin position="19"/>
        <end position="650"/>
    </location>
</feature>
<feature type="transmembrane region" description="Helical" evidence="2">
    <location>
        <begin position="651"/>
        <end position="671"/>
    </location>
</feature>
<feature type="topological domain" description="Cytoplasmic" evidence="2">
    <location>
        <begin position="672"/>
        <end position="692"/>
    </location>
</feature>
<feature type="domain" description="LRRNT" evidence="2">
    <location>
        <begin position="29"/>
        <end position="56"/>
    </location>
</feature>
<feature type="repeat" description="LRR 1" evidence="2">
    <location>
        <begin position="58"/>
        <end position="79"/>
    </location>
</feature>
<feature type="repeat" description="LRR 2" evidence="2">
    <location>
        <begin position="82"/>
        <end position="103"/>
    </location>
</feature>
<feature type="repeat" description="LRR 3" evidence="2">
    <location>
        <begin position="106"/>
        <end position="127"/>
    </location>
</feature>
<feature type="repeat" description="LRR 4" evidence="2">
    <location>
        <begin position="133"/>
        <end position="155"/>
    </location>
</feature>
<feature type="repeat" description="LRR 5" evidence="2">
    <location>
        <begin position="158"/>
        <end position="179"/>
    </location>
</feature>
<feature type="repeat" description="LRR 6" evidence="2">
    <location>
        <begin position="182"/>
        <end position="203"/>
    </location>
</feature>
<feature type="repeat" description="LRR 7" evidence="2">
    <location>
        <begin position="206"/>
        <end position="227"/>
    </location>
</feature>
<feature type="repeat" description="LRR 8" evidence="2">
    <location>
        <begin position="228"/>
        <end position="239"/>
    </location>
</feature>
<feature type="repeat" description="LRR 9" evidence="2">
    <location>
        <begin position="251"/>
        <end position="272"/>
    </location>
</feature>
<feature type="repeat" description="LRR 10" evidence="2">
    <location>
        <begin position="273"/>
        <end position="294"/>
    </location>
</feature>
<feature type="repeat" description="LRR 11" evidence="2">
    <location>
        <begin position="329"/>
        <end position="350"/>
    </location>
</feature>
<feature type="repeat" description="LRR 12" evidence="2">
    <location>
        <begin position="353"/>
        <end position="374"/>
    </location>
</feature>
<feature type="repeat" description="LRR 13" evidence="2">
    <location>
        <begin position="377"/>
        <end position="398"/>
    </location>
</feature>
<feature type="repeat" description="LRR 14" evidence="2">
    <location>
        <begin position="403"/>
        <end position="424"/>
    </location>
</feature>
<feature type="repeat" description="LRR 15" evidence="2">
    <location>
        <begin position="427"/>
        <end position="447"/>
    </location>
</feature>
<feature type="repeat" description="LRR 16" evidence="2">
    <location>
        <begin position="463"/>
        <end position="484"/>
    </location>
</feature>
<feature type="repeat" description="LRR 17" evidence="2">
    <location>
        <begin position="486"/>
        <end position="507"/>
    </location>
</feature>
<feature type="repeat" description="LRR 18" evidence="2">
    <location>
        <begin position="512"/>
        <end position="534"/>
    </location>
</feature>
<feature type="repeat" description="LRR 19" evidence="2">
    <location>
        <begin position="537"/>
        <end position="558"/>
    </location>
</feature>
<feature type="repeat" description="LRR 20" evidence="2">
    <location>
        <begin position="559"/>
        <end position="580"/>
    </location>
</feature>
<feature type="repeat" description="LRR 21" evidence="2">
    <location>
        <begin position="585"/>
        <end position="594"/>
    </location>
</feature>
<feature type="domain" description="LRRCT" evidence="2">
    <location>
        <begin position="595"/>
        <end position="643"/>
    </location>
</feature>
<feature type="glycosylation site" description="N-linked (GlcNAc...) asparagine" evidence="2">
    <location>
        <position position="21"/>
    </location>
</feature>
<feature type="glycosylation site" description="N-linked (GlcNAc...) asparagine" evidence="2">
    <location>
        <position position="74"/>
    </location>
</feature>
<feature type="glycosylation site" description="N-linked (GlcNAc...) asparagine" evidence="2">
    <location>
        <position position="155"/>
    </location>
</feature>
<feature type="glycosylation site" description="N-linked (GlcNAc...) asparagine" evidence="2">
    <location>
        <position position="232"/>
    </location>
</feature>
<feature type="glycosylation site" description="N-linked (GlcNAc...) asparagine" evidence="2">
    <location>
        <position position="292"/>
    </location>
</feature>
<feature type="glycosylation site" description="N-linked (GlcNAc...) asparagine" evidence="2">
    <location>
        <position position="309"/>
    </location>
</feature>
<feature type="glycosylation site" description="N-linked (GlcNAc...) asparagine" evidence="2">
    <location>
        <position position="312"/>
    </location>
</feature>
<feature type="glycosylation site" description="N-linked (GlcNAc...) asparagine" evidence="2">
    <location>
        <position position="408"/>
    </location>
</feature>
<feature type="glycosylation site" description="N-linked (GlcNAc...) asparagine" evidence="2">
    <location>
        <position position="427"/>
    </location>
</feature>
<feature type="glycosylation site" description="N-linked (GlcNAc...) asparagine" evidence="2">
    <location>
        <position position="500"/>
    </location>
</feature>
<feature type="glycosylation site" description="N-linked (GlcNAc...) asparagine" evidence="2">
    <location>
        <position position="622"/>
    </location>
</feature>
<feature type="disulfide bond" description="Interchain (with C-? in TGFB1); in linked form" evidence="1">
    <location>
        <position position="219"/>
    </location>
</feature>
<feature type="disulfide bond" description="Interchain (with C-? in TGFB1); in linked form" evidence="1">
    <location>
        <position position="363"/>
    </location>
</feature>
<feature type="sequence variant" id="VAR_083995" description="In SENEBAC; uncertain significance; dbSNP:rs1737495759." evidence="6">
    <original>L</original>
    <variation>P</variation>
    <location>
        <position position="10"/>
    </location>
</feature>
<feature type="sequence variant" id="VAR_083996" description="In SENEBAC; uncertain significance." evidence="5">
    <location>
        <begin position="593"/>
        <end position="692"/>
    </location>
</feature>
<accession>Q86YC3</accession>
<reference key="1">
    <citation type="journal article" date="2003" name="Genome Res.">
        <title>The secreted protein discovery initiative (SPDI), a large-scale effort to identify novel human secreted and transmembrane proteins: a bioinformatics assessment.</title>
        <authorList>
            <person name="Clark H.F."/>
            <person name="Gurney A.L."/>
            <person name="Abaya E."/>
            <person name="Baker K."/>
            <person name="Baldwin D.T."/>
            <person name="Brush J."/>
            <person name="Chen J."/>
            <person name="Chow B."/>
            <person name="Chui C."/>
            <person name="Crowley C."/>
            <person name="Currell B."/>
            <person name="Deuel B."/>
            <person name="Dowd P."/>
            <person name="Eaton D."/>
            <person name="Foster J.S."/>
            <person name="Grimaldi C."/>
            <person name="Gu Q."/>
            <person name="Hass P.E."/>
            <person name="Heldens S."/>
            <person name="Huang A."/>
            <person name="Kim H.S."/>
            <person name="Klimowski L."/>
            <person name="Jin Y."/>
            <person name="Johnson S."/>
            <person name="Lee J."/>
            <person name="Lewis L."/>
            <person name="Liao D."/>
            <person name="Mark M.R."/>
            <person name="Robbie E."/>
            <person name="Sanchez C."/>
            <person name="Schoenfeld J."/>
            <person name="Seshagiri S."/>
            <person name="Simmons L."/>
            <person name="Singh J."/>
            <person name="Smith V."/>
            <person name="Stinson J."/>
            <person name="Vagts A."/>
            <person name="Vandlen R.L."/>
            <person name="Watanabe C."/>
            <person name="Wieand D."/>
            <person name="Woods K."/>
            <person name="Xie M.-H."/>
            <person name="Yansura D.G."/>
            <person name="Yi S."/>
            <person name="Yu G."/>
            <person name="Yuan J."/>
            <person name="Zhang M."/>
            <person name="Zhang Z."/>
            <person name="Goddard A.D."/>
            <person name="Wood W.I."/>
            <person name="Godowski P.J."/>
            <person name="Gray A.M."/>
        </authorList>
    </citation>
    <scope>NUCLEOTIDE SEQUENCE [LARGE SCALE MRNA]</scope>
</reference>
<reference key="2">
    <citation type="journal article" date="2006" name="Nature">
        <title>The DNA sequence, annotation and analysis of human chromosome 3.</title>
        <authorList>
            <person name="Muzny D.M."/>
            <person name="Scherer S.E."/>
            <person name="Kaul R."/>
            <person name="Wang J."/>
            <person name="Yu J."/>
            <person name="Sudbrak R."/>
            <person name="Buhay C.J."/>
            <person name="Chen R."/>
            <person name="Cree A."/>
            <person name="Ding Y."/>
            <person name="Dugan-Rocha S."/>
            <person name="Gill R."/>
            <person name="Gunaratne P."/>
            <person name="Harris R.A."/>
            <person name="Hawes A.C."/>
            <person name="Hernandez J."/>
            <person name="Hodgson A.V."/>
            <person name="Hume J."/>
            <person name="Jackson A."/>
            <person name="Khan Z.M."/>
            <person name="Kovar-Smith C."/>
            <person name="Lewis L.R."/>
            <person name="Lozado R.J."/>
            <person name="Metzker M.L."/>
            <person name="Milosavljevic A."/>
            <person name="Miner G.R."/>
            <person name="Morgan M.B."/>
            <person name="Nazareth L.V."/>
            <person name="Scott G."/>
            <person name="Sodergren E."/>
            <person name="Song X.-Z."/>
            <person name="Steffen D."/>
            <person name="Wei S."/>
            <person name="Wheeler D.A."/>
            <person name="Wright M.W."/>
            <person name="Worley K.C."/>
            <person name="Yuan Y."/>
            <person name="Zhang Z."/>
            <person name="Adams C.Q."/>
            <person name="Ansari-Lari M.A."/>
            <person name="Ayele M."/>
            <person name="Brown M.J."/>
            <person name="Chen G."/>
            <person name="Chen Z."/>
            <person name="Clendenning J."/>
            <person name="Clerc-Blankenburg K.P."/>
            <person name="Chen R."/>
            <person name="Chen Z."/>
            <person name="Davis C."/>
            <person name="Delgado O."/>
            <person name="Dinh H.H."/>
            <person name="Dong W."/>
            <person name="Draper H."/>
            <person name="Ernst S."/>
            <person name="Fu G."/>
            <person name="Gonzalez-Garay M.L."/>
            <person name="Garcia D.K."/>
            <person name="Gillett W."/>
            <person name="Gu J."/>
            <person name="Hao B."/>
            <person name="Haugen E."/>
            <person name="Havlak P."/>
            <person name="He X."/>
            <person name="Hennig S."/>
            <person name="Hu S."/>
            <person name="Huang W."/>
            <person name="Jackson L.R."/>
            <person name="Jacob L.S."/>
            <person name="Kelly S.H."/>
            <person name="Kube M."/>
            <person name="Levy R."/>
            <person name="Li Z."/>
            <person name="Liu B."/>
            <person name="Liu J."/>
            <person name="Liu W."/>
            <person name="Lu J."/>
            <person name="Maheshwari M."/>
            <person name="Nguyen B.-V."/>
            <person name="Okwuonu G.O."/>
            <person name="Palmeiri A."/>
            <person name="Pasternak S."/>
            <person name="Perez L.M."/>
            <person name="Phelps K.A."/>
            <person name="Plopper F.J."/>
            <person name="Qiang B."/>
            <person name="Raymond C."/>
            <person name="Rodriguez R."/>
            <person name="Saenphimmachak C."/>
            <person name="Santibanez J."/>
            <person name="Shen H."/>
            <person name="Shen Y."/>
            <person name="Subramanian S."/>
            <person name="Tabor P.E."/>
            <person name="Verduzco D."/>
            <person name="Waldron L."/>
            <person name="Wang J."/>
            <person name="Wang J."/>
            <person name="Wang Q."/>
            <person name="Williams G.A."/>
            <person name="Wong G.K.-S."/>
            <person name="Yao Z."/>
            <person name="Zhang J."/>
            <person name="Zhang X."/>
            <person name="Zhao G."/>
            <person name="Zhou J."/>
            <person name="Zhou Y."/>
            <person name="Nelson D."/>
            <person name="Lehrach H."/>
            <person name="Reinhardt R."/>
            <person name="Naylor S.L."/>
            <person name="Yang H."/>
            <person name="Olson M."/>
            <person name="Weinstock G."/>
            <person name="Gibbs R.A."/>
        </authorList>
    </citation>
    <scope>NUCLEOTIDE SEQUENCE [LARGE SCALE GENOMIC DNA]</scope>
</reference>
<reference key="3">
    <citation type="journal article" date="2004" name="Genome Res.">
        <title>The status, quality, and expansion of the NIH full-length cDNA project: the Mammalian Gene Collection (MGC).</title>
        <authorList>
            <consortium name="The MGC Project Team"/>
        </authorList>
    </citation>
    <scope>NUCLEOTIDE SEQUENCE [LARGE SCALE MRNA]</scope>
    <source>
        <tissue>Ovary</tissue>
    </source>
</reference>
<reference key="4">
    <citation type="journal article" date="2013" name="Biochem. Biophys. Res. Commun.">
        <title>Identification and characterization of a unique leucine-rich repeat protein (LRRC33) that inhibits Toll-like receptor-mediated NF-kappa-B activation.</title>
        <authorList>
            <person name="Liu J."/>
            <person name="Zhang Z."/>
            <person name="Chai L."/>
            <person name="Che Y."/>
            <person name="Min S."/>
            <person name="Yang R."/>
        </authorList>
    </citation>
    <scope>FUNCTION</scope>
    <scope>TISSUE SPECIFICITY</scope>
    <scope>INTERACTION WITH TOLL-LIKE RECEPTORS</scope>
    <scope>SUBCELLULAR LOCATION</scope>
</reference>
<reference key="5">
    <citation type="journal article" date="2018" name="Cell">
        <title>A milieu molecule for TGF-beta required for microglia function in the nervous system.</title>
        <authorList>
            <person name="Qin Y."/>
            <person name="Garrison B.S."/>
            <person name="Ma W."/>
            <person name="Wang R."/>
            <person name="Jiang A."/>
            <person name="Li J."/>
            <person name="Mistry M."/>
            <person name="Bronson R.T."/>
            <person name="Santoro D."/>
            <person name="Franco C."/>
            <person name="Robinton D.A."/>
            <person name="Stevens B."/>
            <person name="Rossi D.J."/>
            <person name="Lu C."/>
            <person name="Springer T.A."/>
        </authorList>
    </citation>
    <scope>SUBCELLULAR LOCATION</scope>
    <scope>INTERACTION WITH TGFB1</scope>
    <scope>TISSUE SPECIFICITY</scope>
</reference>
<reference key="6">
    <citation type="journal article" date="2020" name="Acta Neuropathol.">
        <title>Biallelic mutations in NRROS cause an early onset lethal microgliopathy.</title>
        <authorList>
            <person name="Smith C."/>
            <person name="McColl B.W."/>
            <person name="Patir A."/>
            <person name="Barrington J."/>
            <person name="Armishaw J."/>
            <person name="Clarke A."/>
            <person name="Eaton J."/>
            <person name="Hobbs V."/>
            <person name="Mansour S."/>
            <person name="Nolan M."/>
            <person name="Rice G.I."/>
            <person name="Rodero M.P."/>
            <person name="Seabra L."/>
            <person name="Uggenti C."/>
            <person name="Livingston J.H."/>
            <person name="Bridges L.R."/>
            <person name="Jeffrey I.J.M."/>
            <person name="Crow Y.J."/>
        </authorList>
    </citation>
    <scope>INVOLVEMENT IN SENEBAC</scope>
    <scope>VARIANT SENEBAC 593-GLN--TYR-692 DEL</scope>
    <scope>TISSUE SPECIFICITY</scope>
</reference>
<reference key="7">
    <citation type="journal article" date="2020" name="Am. J. Hum. Genet.">
        <title>Bi-allelic LoF NRROS Variants Impairing Active TGF-beta1 Delivery Cause a Severe Infantile-Onset Neurodegenerative Condition with Intracranial Calcification.</title>
        <authorList>
            <person name="Dong X."/>
            <person name="Tan N.B."/>
            <person name="Howell K.B."/>
            <person name="Barresi S."/>
            <person name="Freeman J.L."/>
            <person name="Vecchio D."/>
            <person name="Piccione M."/>
            <person name="Radio F.C."/>
            <person name="Calame D."/>
            <person name="Zong S."/>
            <person name="Eggers S."/>
            <person name="Scheffer I.E."/>
            <person name="Tan T.Y."/>
            <person name="Van Bergen N.J."/>
            <person name="Tartaglia M."/>
            <person name="Christodoulou J."/>
            <person name="White S.M."/>
        </authorList>
    </citation>
    <scope>INVOLVEMENT IN SENEBAC</scope>
    <scope>VARIANT SENEBAC PRO-10</scope>
    <scope>SUBCELLULAR LOCATION</scope>
</reference>
<dbReference type="EMBL" id="AY358322">
    <property type="protein sequence ID" value="AAQ88688.1"/>
    <property type="molecule type" value="mRNA"/>
</dbReference>
<dbReference type="EMBL" id="AC055725">
    <property type="status" value="NOT_ANNOTATED_CDS"/>
    <property type="molecule type" value="Genomic_DNA"/>
</dbReference>
<dbReference type="EMBL" id="BC044233">
    <property type="protein sequence ID" value="AAH44233.1"/>
    <property type="molecule type" value="mRNA"/>
</dbReference>
<dbReference type="CCDS" id="CCDS3319.1"/>
<dbReference type="RefSeq" id="NP_940967.1">
    <property type="nucleotide sequence ID" value="NM_198565.3"/>
</dbReference>
<dbReference type="EMDB" id="EMD-33571"/>
<dbReference type="EMDB" id="EMD-33573"/>
<dbReference type="SMR" id="Q86YC3"/>
<dbReference type="BioGRID" id="131978">
    <property type="interactions" value="37"/>
</dbReference>
<dbReference type="FunCoup" id="Q86YC3">
    <property type="interactions" value="208"/>
</dbReference>
<dbReference type="IntAct" id="Q86YC3">
    <property type="interactions" value="23"/>
</dbReference>
<dbReference type="STRING" id="9606.ENSP00000328625"/>
<dbReference type="GlyCosmos" id="Q86YC3">
    <property type="glycosylation" value="11 sites, No reported glycans"/>
</dbReference>
<dbReference type="GlyGen" id="Q86YC3">
    <property type="glycosylation" value="11 sites, 5 N-linked glycans (2 sites)"/>
</dbReference>
<dbReference type="iPTMnet" id="Q86YC3"/>
<dbReference type="PhosphoSitePlus" id="Q86YC3"/>
<dbReference type="BioMuta" id="NRROS"/>
<dbReference type="DMDM" id="74762465"/>
<dbReference type="jPOST" id="Q86YC3"/>
<dbReference type="MassIVE" id="Q86YC3"/>
<dbReference type="PaxDb" id="9606-ENSP00000328625"/>
<dbReference type="PeptideAtlas" id="Q86YC3"/>
<dbReference type="ProteomicsDB" id="70396"/>
<dbReference type="Antibodypedia" id="33944">
    <property type="antibodies" value="93 antibodies from 17 providers"/>
</dbReference>
<dbReference type="DNASU" id="375387"/>
<dbReference type="Ensembl" id="ENST00000328557.5">
    <property type="protein sequence ID" value="ENSP00000328625.4"/>
    <property type="gene ID" value="ENSG00000174004.6"/>
</dbReference>
<dbReference type="GeneID" id="375387"/>
<dbReference type="KEGG" id="hsa:375387"/>
<dbReference type="MANE-Select" id="ENST00000328557.5">
    <property type="protein sequence ID" value="ENSP00000328625.4"/>
    <property type="RefSeq nucleotide sequence ID" value="NM_198565.3"/>
    <property type="RefSeq protein sequence ID" value="NP_940967.1"/>
</dbReference>
<dbReference type="UCSC" id="uc003fwv.4">
    <property type="organism name" value="human"/>
</dbReference>
<dbReference type="AGR" id="HGNC:24613"/>
<dbReference type="CTD" id="375387"/>
<dbReference type="DisGeNET" id="375387"/>
<dbReference type="GeneCards" id="NRROS"/>
<dbReference type="HGNC" id="HGNC:24613">
    <property type="gene designation" value="NRROS"/>
</dbReference>
<dbReference type="HPA" id="ENSG00000174004">
    <property type="expression patterns" value="Tissue enhanced (bone)"/>
</dbReference>
<dbReference type="MalaCards" id="NRROS"/>
<dbReference type="MIM" id="615322">
    <property type="type" value="gene"/>
</dbReference>
<dbReference type="MIM" id="618875">
    <property type="type" value="phenotype"/>
</dbReference>
<dbReference type="neXtProt" id="NX_Q86YC3"/>
<dbReference type="OpenTargets" id="ENSG00000174004"/>
<dbReference type="PharmGKB" id="PA142671521"/>
<dbReference type="VEuPathDB" id="HostDB:ENSG00000174004"/>
<dbReference type="eggNOG" id="KOG0619">
    <property type="taxonomic scope" value="Eukaryota"/>
</dbReference>
<dbReference type="GeneTree" id="ENSGT00940000157975"/>
<dbReference type="HOGENOM" id="CLU_024194_0_0_1"/>
<dbReference type="InParanoid" id="Q86YC3"/>
<dbReference type="OMA" id="DWAMVTC"/>
<dbReference type="OrthoDB" id="676979at2759"/>
<dbReference type="PAN-GO" id="Q86YC3">
    <property type="GO annotations" value="5 GO annotations based on evolutionary models"/>
</dbReference>
<dbReference type="PhylomeDB" id="Q86YC3"/>
<dbReference type="TreeFam" id="TF317167"/>
<dbReference type="PathwayCommons" id="Q86YC3"/>
<dbReference type="SignaLink" id="Q86YC3"/>
<dbReference type="BioGRID-ORCS" id="375387">
    <property type="hits" value="15 hits in 1138 CRISPR screens"/>
</dbReference>
<dbReference type="ChiTaRS" id="NRROS">
    <property type="organism name" value="human"/>
</dbReference>
<dbReference type="GenomeRNAi" id="375387"/>
<dbReference type="Pharos" id="Q86YC3">
    <property type="development level" value="Tbio"/>
</dbReference>
<dbReference type="PRO" id="PR:Q86YC3"/>
<dbReference type="Proteomes" id="UP000005640">
    <property type="component" value="Chromosome 3"/>
</dbReference>
<dbReference type="RNAct" id="Q86YC3">
    <property type="molecule type" value="protein"/>
</dbReference>
<dbReference type="Bgee" id="ENSG00000174004">
    <property type="expression patterns" value="Expressed in monocyte and 105 other cell types or tissues"/>
</dbReference>
<dbReference type="GO" id="GO:0009986">
    <property type="term" value="C:cell surface"/>
    <property type="evidence" value="ECO:0000314"/>
    <property type="project" value="UniProtKB"/>
</dbReference>
<dbReference type="GO" id="GO:0005783">
    <property type="term" value="C:endoplasmic reticulum"/>
    <property type="evidence" value="ECO:0000250"/>
    <property type="project" value="UniProtKB"/>
</dbReference>
<dbReference type="GO" id="GO:0005789">
    <property type="term" value="C:endoplasmic reticulum membrane"/>
    <property type="evidence" value="ECO:0007669"/>
    <property type="project" value="UniProtKB-SubCell"/>
</dbReference>
<dbReference type="GO" id="GO:0005615">
    <property type="term" value="C:extracellular space"/>
    <property type="evidence" value="ECO:0000318"/>
    <property type="project" value="GO_Central"/>
</dbReference>
<dbReference type="GO" id="GO:0005886">
    <property type="term" value="C:plasma membrane"/>
    <property type="evidence" value="ECO:0007669"/>
    <property type="project" value="UniProtKB-SubCell"/>
</dbReference>
<dbReference type="GO" id="GO:0141069">
    <property type="term" value="F:receptor ligand inhibitor activity"/>
    <property type="evidence" value="ECO:0000250"/>
    <property type="project" value="UniProtKB"/>
</dbReference>
<dbReference type="GO" id="GO:0050431">
    <property type="term" value="F:transforming growth factor beta binding"/>
    <property type="evidence" value="ECO:0000353"/>
    <property type="project" value="UniProtKB"/>
</dbReference>
<dbReference type="GO" id="GO:0006955">
    <property type="term" value="P:immune response"/>
    <property type="evidence" value="ECO:0000250"/>
    <property type="project" value="UniProtKB"/>
</dbReference>
<dbReference type="GO" id="GO:0006954">
    <property type="term" value="P:inflammatory response"/>
    <property type="evidence" value="ECO:0000250"/>
    <property type="project" value="UniProtKB"/>
</dbReference>
<dbReference type="GO" id="GO:0014005">
    <property type="term" value="P:microglia development"/>
    <property type="evidence" value="ECO:0000250"/>
    <property type="project" value="UniProtKB"/>
</dbReference>
<dbReference type="GO" id="GO:0035583">
    <property type="term" value="P:sequestering of TGFbeta in extracellular matrix"/>
    <property type="evidence" value="ECO:0000250"/>
    <property type="project" value="UniProtKB"/>
</dbReference>
<dbReference type="GO" id="GO:0007179">
    <property type="term" value="P:transforming growth factor beta receptor signaling pathway"/>
    <property type="evidence" value="ECO:0000318"/>
    <property type="project" value="GO_Central"/>
</dbReference>
<dbReference type="FunFam" id="3.80.10.10:FF:000543">
    <property type="entry name" value="Transforming growth factor beta activator LRRC33"/>
    <property type="match status" value="1"/>
</dbReference>
<dbReference type="FunFam" id="3.80.10.10:FF:000684">
    <property type="entry name" value="Transforming growth factor beta activator LRRC33"/>
    <property type="match status" value="1"/>
</dbReference>
<dbReference type="FunFam" id="3.80.10.10:FF:000688">
    <property type="entry name" value="Transforming growth factor beta activator LRRC33"/>
    <property type="match status" value="1"/>
</dbReference>
<dbReference type="FunFam" id="3.80.10.10:FF:000806">
    <property type="entry name" value="Transforming growth factor beta activator LRRC33"/>
    <property type="match status" value="1"/>
</dbReference>
<dbReference type="Gene3D" id="3.80.10.10">
    <property type="entry name" value="Ribonuclease Inhibitor"/>
    <property type="match status" value="4"/>
</dbReference>
<dbReference type="InterPro" id="IPR050328">
    <property type="entry name" value="Dev_Immune_Receptor"/>
</dbReference>
<dbReference type="InterPro" id="IPR001611">
    <property type="entry name" value="Leu-rich_rpt"/>
</dbReference>
<dbReference type="InterPro" id="IPR003591">
    <property type="entry name" value="Leu-rich_rpt_typical-subtyp"/>
</dbReference>
<dbReference type="InterPro" id="IPR032675">
    <property type="entry name" value="LRR_dom_sf"/>
</dbReference>
<dbReference type="PANTHER" id="PTHR24373">
    <property type="entry name" value="SLIT RELATED LEUCINE-RICH REPEAT NEURONAL PROTEIN"/>
    <property type="match status" value="1"/>
</dbReference>
<dbReference type="PANTHER" id="PTHR24373:SF275">
    <property type="entry name" value="TIR DOMAIN-CONTAINING PROTEIN"/>
    <property type="match status" value="1"/>
</dbReference>
<dbReference type="Pfam" id="PF00560">
    <property type="entry name" value="LRR_1"/>
    <property type="match status" value="2"/>
</dbReference>
<dbReference type="Pfam" id="PF13516">
    <property type="entry name" value="LRR_6"/>
    <property type="match status" value="1"/>
</dbReference>
<dbReference type="Pfam" id="PF13855">
    <property type="entry name" value="LRR_8"/>
    <property type="match status" value="3"/>
</dbReference>
<dbReference type="PRINTS" id="PR00019">
    <property type="entry name" value="LEURICHRPT"/>
</dbReference>
<dbReference type="SMART" id="SM00369">
    <property type="entry name" value="LRR_TYP"/>
    <property type="match status" value="12"/>
</dbReference>
<dbReference type="SUPFAM" id="SSF52058">
    <property type="entry name" value="L domain-like"/>
    <property type="match status" value="1"/>
</dbReference>
<dbReference type="SUPFAM" id="SSF52047">
    <property type="entry name" value="RNI-like"/>
    <property type="match status" value="1"/>
</dbReference>
<dbReference type="PROSITE" id="PS51450">
    <property type="entry name" value="LRR"/>
    <property type="match status" value="18"/>
</dbReference>
<name>LRC33_HUMAN</name>